<keyword id="KW-1015">Disulfide bond</keyword>
<keyword id="KW-0872">Ion channel impairing toxin</keyword>
<keyword id="KW-0960">Knottin</keyword>
<keyword id="KW-0964">Secreted</keyword>
<keyword id="KW-0732">Signal</keyword>
<keyword id="KW-0800">Toxin</keyword>
<accession>D2Y247</accession>
<evidence type="ECO:0000250" key="1"/>
<evidence type="ECO:0000250" key="2">
    <source>
        <dbReference type="UniProtKB" id="B3FIS6"/>
    </source>
</evidence>
<evidence type="ECO:0000255" key="3"/>
<evidence type="ECO:0000305" key="4"/>
<dbReference type="EMBL" id="GU292924">
    <property type="protein sequence ID" value="ADB56740.1"/>
    <property type="molecule type" value="mRNA"/>
</dbReference>
<dbReference type="SMR" id="D2Y247"/>
<dbReference type="ArachnoServer" id="AS001543">
    <property type="toxin name" value="U3-theraphotoxin-Hhn1m"/>
</dbReference>
<dbReference type="GO" id="GO:0005576">
    <property type="term" value="C:extracellular region"/>
    <property type="evidence" value="ECO:0007669"/>
    <property type="project" value="UniProtKB-SubCell"/>
</dbReference>
<dbReference type="GO" id="GO:0008200">
    <property type="term" value="F:ion channel inhibitor activity"/>
    <property type="evidence" value="ECO:0007669"/>
    <property type="project" value="InterPro"/>
</dbReference>
<dbReference type="GO" id="GO:0090729">
    <property type="term" value="F:toxin activity"/>
    <property type="evidence" value="ECO:0007669"/>
    <property type="project" value="UniProtKB-KW"/>
</dbReference>
<dbReference type="InterPro" id="IPR011696">
    <property type="entry name" value="Huwentoxin-1"/>
</dbReference>
<dbReference type="InterPro" id="IPR013140">
    <property type="entry name" value="Huwentoxin_CS1"/>
</dbReference>
<dbReference type="Pfam" id="PF07740">
    <property type="entry name" value="Toxin_12"/>
    <property type="match status" value="1"/>
</dbReference>
<dbReference type="SUPFAM" id="SSF57059">
    <property type="entry name" value="omega toxin-like"/>
    <property type="match status" value="1"/>
</dbReference>
<dbReference type="PROSITE" id="PS60021">
    <property type="entry name" value="HWTX_1"/>
    <property type="match status" value="1"/>
</dbReference>
<organism>
    <name type="scientific">Cyriopagopus hainanus</name>
    <name type="common">Chinese bird spider</name>
    <name type="synonym">Haplopelma hainanum</name>
    <dbReference type="NCBI Taxonomy" id="209901"/>
    <lineage>
        <taxon>Eukaryota</taxon>
        <taxon>Metazoa</taxon>
        <taxon>Ecdysozoa</taxon>
        <taxon>Arthropoda</taxon>
        <taxon>Chelicerata</taxon>
        <taxon>Arachnida</taxon>
        <taxon>Araneae</taxon>
        <taxon>Mygalomorphae</taxon>
        <taxon>Theraphosidae</taxon>
        <taxon>Haplopelma</taxon>
    </lineage>
</organism>
<proteinExistence type="evidence at transcript level"/>
<sequence length="87" mass="10182">MVNMKASMFLTFAGLVLLFVVCYASESEEKEFPKEMLSSIFAVDNDFKQEERDCAGYMRECKEKLCCNGYVCSSRWKWCVLPAPWRR</sequence>
<protein>
    <recommendedName>
        <fullName>U3-theraphotoxin-Hhn1m</fullName>
        <shortName>U3-TRTX-Hhn1m</shortName>
    </recommendedName>
    <alternativeName>
        <fullName>Hainantoxin-VIII-5</fullName>
        <shortName>HNTX-VIII-5</shortName>
    </alternativeName>
</protein>
<comment type="function">
    <text evidence="1">Ion channel inhibitor.</text>
</comment>
<comment type="subcellular location">
    <subcellularLocation>
        <location evidence="1">Secreted</location>
    </subcellularLocation>
</comment>
<comment type="tissue specificity">
    <text>Expressed by the venom gland.</text>
</comment>
<comment type="domain">
    <text evidence="1">The presence of a 'disulfide through disulfide knot' structurally defines this protein as a knottin.</text>
</comment>
<comment type="similarity">
    <text evidence="4">Belongs to the neurotoxin 10 (Hwtx-1) family. 51 (Hntx-8) subfamily. Hntx-8 sub-subfamily.</text>
</comment>
<name>H8E01_CYRHA</name>
<feature type="signal peptide" evidence="3">
    <location>
        <begin position="1"/>
        <end position="24"/>
    </location>
</feature>
<feature type="propeptide" id="PRO_0000400623" evidence="1">
    <location>
        <begin position="25"/>
        <end position="52"/>
    </location>
</feature>
<feature type="peptide" id="PRO_0000400624" description="U3-theraphotoxin-Hhn1m">
    <location>
        <begin position="53"/>
        <end position="87"/>
    </location>
</feature>
<feature type="disulfide bond" evidence="2">
    <location>
        <begin position="54"/>
        <end position="67"/>
    </location>
</feature>
<feature type="disulfide bond" evidence="2">
    <location>
        <begin position="61"/>
        <end position="72"/>
    </location>
</feature>
<feature type="disulfide bond" evidence="2">
    <location>
        <begin position="66"/>
        <end position="79"/>
    </location>
</feature>
<reference key="1">
    <citation type="journal article" date="2010" name="J. Proteome Res.">
        <title>Molecular diversification of peptide toxins from the tarantula Haplopelma hainanum (Ornithoctonus hainana) venom based on transcriptomic, peptidomic, and genomic analyses.</title>
        <authorList>
            <person name="Tang X."/>
            <person name="Zhang Y."/>
            <person name="Hu W."/>
            <person name="Xu D."/>
            <person name="Tao H."/>
            <person name="Yang X."/>
            <person name="Li Y."/>
            <person name="Jiang L."/>
            <person name="Liang S."/>
        </authorList>
    </citation>
    <scope>NUCLEOTIDE SEQUENCE [LARGE SCALE MRNA]</scope>
    <source>
        <tissue>Venom gland</tissue>
    </source>
</reference>